<feature type="chain" id="PRO_1000008870" description="Elongation factor G">
    <location>
        <begin position="1"/>
        <end position="715"/>
    </location>
</feature>
<feature type="domain" description="tr-type G">
    <location>
        <begin position="8"/>
        <end position="290"/>
    </location>
</feature>
<feature type="binding site" evidence="1">
    <location>
        <begin position="17"/>
        <end position="24"/>
    </location>
    <ligand>
        <name>GTP</name>
        <dbReference type="ChEBI" id="CHEBI:37565"/>
    </ligand>
</feature>
<feature type="binding site" evidence="1">
    <location>
        <begin position="88"/>
        <end position="92"/>
    </location>
    <ligand>
        <name>GTP</name>
        <dbReference type="ChEBI" id="CHEBI:37565"/>
    </ligand>
</feature>
<feature type="binding site" evidence="1">
    <location>
        <begin position="142"/>
        <end position="145"/>
    </location>
    <ligand>
        <name>GTP</name>
        <dbReference type="ChEBI" id="CHEBI:37565"/>
    </ligand>
</feature>
<keyword id="KW-0963">Cytoplasm</keyword>
<keyword id="KW-0251">Elongation factor</keyword>
<keyword id="KW-0342">GTP-binding</keyword>
<keyword id="KW-0547">Nucleotide-binding</keyword>
<keyword id="KW-0648">Protein biosynthesis</keyword>
<proteinExistence type="inferred from homology"/>
<sequence>MARNTAINRYRNIGICAHVDAGKTTTTERILFYTGLSHKMGEVHDGAATTDWMVQEQERGITITSAAITTFWEGSRRQYDKYRVNVIDTPGHVDFTIEVERSLRVLDGAVVVFCGTSGVEPQSETVWRQANKYGVPRIVYVNKMDRQGANFLRVVGQIKNRLGHTPVPIQIAIGAEENFEGQVDLIKMKAIYWNDDDKGTTYREEEIPAELVDLANEWRSNMVEAAAEASEELMNKYLEEGDLSAEDIKAGLRARTLASEIVPAVCGSSFKNKGVPLVLDAVIDFLPAPTEIPAIKGIHPDLADKPKEQMEESDYDERHADDNEPFSALAFKIATDPFVGTLTFVRVYSGVLESGQSVINSVKGKKERVGRMVQMHANQRDEIKEVRAGDIAALIGMKDVTTGETLCDPDKPIILERMDFPEPVISVAVEPKTKADQEKMGIALGKLAQEDPSFRVKTDEETGQTIISGMGELHLDILVDRMKREFNVEANIGKPQVSYRETITKDSVEIEGKFVRQSGGRGQFGHCWIRFSAPDVDDKGNITEGLVFTNEVVGGVVPKEYIPAIQKGIEEQMKNGVVAGYPLIGLKATVFDGSYHDVDSNEMAFKIAASMATKQLAQKGGGKVLEPIMKVEVVTPEDYMGDVMGDLNRRRGLIQGMEDSVSGKVIRAEVPLGEMFGYATDVRSMSQGRASYSMEFSKYAEAPSNIVEALVKKQG</sequence>
<protein>
    <recommendedName>
        <fullName evidence="1">Elongation factor G</fullName>
        <shortName evidence="1">EF-G</shortName>
    </recommendedName>
</protein>
<comment type="function">
    <text evidence="1">Catalyzes the GTP-dependent ribosomal translocation step during translation elongation. During this step, the ribosome changes from the pre-translocational (PRE) to the post-translocational (POST) state as the newly formed A-site-bound peptidyl-tRNA and P-site-bound deacylated tRNA move to the P and E sites, respectively. Catalyzes the coordinated movement of the two tRNA molecules, the mRNA and conformational changes in the ribosome.</text>
</comment>
<comment type="subcellular location">
    <subcellularLocation>
        <location evidence="1">Cytoplasm</location>
    </subcellularLocation>
</comment>
<comment type="similarity">
    <text evidence="1">Belongs to the TRAFAC class translation factor GTPase superfamily. Classic translation factor GTPase family. EF-G/EF-2 subfamily.</text>
</comment>
<dbReference type="EMBL" id="CP000680">
    <property type="protein sequence ID" value="ABP86659.1"/>
    <property type="molecule type" value="Genomic_DNA"/>
</dbReference>
<dbReference type="SMR" id="A4XZ93"/>
<dbReference type="STRING" id="399739.Pmen_3912"/>
<dbReference type="KEGG" id="pmy:Pmen_3912"/>
<dbReference type="PATRIC" id="fig|399739.8.peg.3965"/>
<dbReference type="eggNOG" id="COG0480">
    <property type="taxonomic scope" value="Bacteria"/>
</dbReference>
<dbReference type="HOGENOM" id="CLU_002794_4_2_6"/>
<dbReference type="OrthoDB" id="9804431at2"/>
<dbReference type="GO" id="GO:0005737">
    <property type="term" value="C:cytoplasm"/>
    <property type="evidence" value="ECO:0007669"/>
    <property type="project" value="UniProtKB-SubCell"/>
</dbReference>
<dbReference type="GO" id="GO:0005525">
    <property type="term" value="F:GTP binding"/>
    <property type="evidence" value="ECO:0007669"/>
    <property type="project" value="UniProtKB-UniRule"/>
</dbReference>
<dbReference type="GO" id="GO:0003924">
    <property type="term" value="F:GTPase activity"/>
    <property type="evidence" value="ECO:0007669"/>
    <property type="project" value="InterPro"/>
</dbReference>
<dbReference type="GO" id="GO:0097216">
    <property type="term" value="F:guanosine tetraphosphate binding"/>
    <property type="evidence" value="ECO:0007669"/>
    <property type="project" value="UniProtKB-ARBA"/>
</dbReference>
<dbReference type="GO" id="GO:0003746">
    <property type="term" value="F:translation elongation factor activity"/>
    <property type="evidence" value="ECO:0007669"/>
    <property type="project" value="UniProtKB-UniRule"/>
</dbReference>
<dbReference type="GO" id="GO:0032790">
    <property type="term" value="P:ribosome disassembly"/>
    <property type="evidence" value="ECO:0007669"/>
    <property type="project" value="TreeGrafter"/>
</dbReference>
<dbReference type="CDD" id="cd01886">
    <property type="entry name" value="EF-G"/>
    <property type="match status" value="1"/>
</dbReference>
<dbReference type="CDD" id="cd16262">
    <property type="entry name" value="EFG_III"/>
    <property type="match status" value="1"/>
</dbReference>
<dbReference type="CDD" id="cd01434">
    <property type="entry name" value="EFG_mtEFG1_IV"/>
    <property type="match status" value="1"/>
</dbReference>
<dbReference type="CDD" id="cd03713">
    <property type="entry name" value="EFG_mtEFG_C"/>
    <property type="match status" value="1"/>
</dbReference>
<dbReference type="CDD" id="cd04088">
    <property type="entry name" value="EFG_mtEFG_II"/>
    <property type="match status" value="1"/>
</dbReference>
<dbReference type="FunFam" id="2.40.30.10:FF:000006">
    <property type="entry name" value="Elongation factor G"/>
    <property type="match status" value="1"/>
</dbReference>
<dbReference type="FunFam" id="3.30.230.10:FF:000003">
    <property type="entry name" value="Elongation factor G"/>
    <property type="match status" value="1"/>
</dbReference>
<dbReference type="FunFam" id="3.30.70.240:FF:000001">
    <property type="entry name" value="Elongation factor G"/>
    <property type="match status" value="1"/>
</dbReference>
<dbReference type="FunFam" id="3.30.70.870:FF:000001">
    <property type="entry name" value="Elongation factor G"/>
    <property type="match status" value="1"/>
</dbReference>
<dbReference type="FunFam" id="3.40.50.300:FF:000029">
    <property type="entry name" value="Elongation factor G"/>
    <property type="match status" value="1"/>
</dbReference>
<dbReference type="Gene3D" id="3.30.230.10">
    <property type="match status" value="1"/>
</dbReference>
<dbReference type="Gene3D" id="3.30.70.240">
    <property type="match status" value="1"/>
</dbReference>
<dbReference type="Gene3D" id="3.30.70.870">
    <property type="entry name" value="Elongation Factor G (Translational Gtpase), domain 3"/>
    <property type="match status" value="1"/>
</dbReference>
<dbReference type="Gene3D" id="3.40.50.300">
    <property type="entry name" value="P-loop containing nucleotide triphosphate hydrolases"/>
    <property type="match status" value="1"/>
</dbReference>
<dbReference type="Gene3D" id="2.40.30.10">
    <property type="entry name" value="Translation factors"/>
    <property type="match status" value="1"/>
</dbReference>
<dbReference type="HAMAP" id="MF_00054_B">
    <property type="entry name" value="EF_G_EF_2_B"/>
    <property type="match status" value="1"/>
</dbReference>
<dbReference type="InterPro" id="IPR041095">
    <property type="entry name" value="EFG_II"/>
</dbReference>
<dbReference type="InterPro" id="IPR009022">
    <property type="entry name" value="EFG_III"/>
</dbReference>
<dbReference type="InterPro" id="IPR035647">
    <property type="entry name" value="EFG_III/V"/>
</dbReference>
<dbReference type="InterPro" id="IPR047872">
    <property type="entry name" value="EFG_IV"/>
</dbReference>
<dbReference type="InterPro" id="IPR035649">
    <property type="entry name" value="EFG_V"/>
</dbReference>
<dbReference type="InterPro" id="IPR000640">
    <property type="entry name" value="EFG_V-like"/>
</dbReference>
<dbReference type="InterPro" id="IPR004161">
    <property type="entry name" value="EFTu-like_2"/>
</dbReference>
<dbReference type="InterPro" id="IPR031157">
    <property type="entry name" value="G_TR_CS"/>
</dbReference>
<dbReference type="InterPro" id="IPR027417">
    <property type="entry name" value="P-loop_NTPase"/>
</dbReference>
<dbReference type="InterPro" id="IPR020568">
    <property type="entry name" value="Ribosomal_Su5_D2-typ_SF"/>
</dbReference>
<dbReference type="InterPro" id="IPR014721">
    <property type="entry name" value="Ribsml_uS5_D2-typ_fold_subgr"/>
</dbReference>
<dbReference type="InterPro" id="IPR005225">
    <property type="entry name" value="Small_GTP-bd"/>
</dbReference>
<dbReference type="InterPro" id="IPR000795">
    <property type="entry name" value="T_Tr_GTP-bd_dom"/>
</dbReference>
<dbReference type="InterPro" id="IPR009000">
    <property type="entry name" value="Transl_B-barrel_sf"/>
</dbReference>
<dbReference type="InterPro" id="IPR004540">
    <property type="entry name" value="Transl_elong_EFG/EF2"/>
</dbReference>
<dbReference type="InterPro" id="IPR005517">
    <property type="entry name" value="Transl_elong_EFG/EF2_IV"/>
</dbReference>
<dbReference type="NCBIfam" id="TIGR00484">
    <property type="entry name" value="EF-G"/>
    <property type="match status" value="1"/>
</dbReference>
<dbReference type="NCBIfam" id="NF009381">
    <property type="entry name" value="PRK12740.1-5"/>
    <property type="match status" value="1"/>
</dbReference>
<dbReference type="NCBIfam" id="TIGR00231">
    <property type="entry name" value="small_GTP"/>
    <property type="match status" value="1"/>
</dbReference>
<dbReference type="PANTHER" id="PTHR43261:SF1">
    <property type="entry name" value="RIBOSOME-RELEASING FACTOR 2, MITOCHONDRIAL"/>
    <property type="match status" value="1"/>
</dbReference>
<dbReference type="PANTHER" id="PTHR43261">
    <property type="entry name" value="TRANSLATION ELONGATION FACTOR G-RELATED"/>
    <property type="match status" value="1"/>
</dbReference>
<dbReference type="Pfam" id="PF00679">
    <property type="entry name" value="EFG_C"/>
    <property type="match status" value="1"/>
</dbReference>
<dbReference type="Pfam" id="PF14492">
    <property type="entry name" value="EFG_III"/>
    <property type="match status" value="1"/>
</dbReference>
<dbReference type="Pfam" id="PF03764">
    <property type="entry name" value="EFG_IV"/>
    <property type="match status" value="1"/>
</dbReference>
<dbReference type="Pfam" id="PF00009">
    <property type="entry name" value="GTP_EFTU"/>
    <property type="match status" value="1"/>
</dbReference>
<dbReference type="Pfam" id="PF03144">
    <property type="entry name" value="GTP_EFTU_D2"/>
    <property type="match status" value="1"/>
</dbReference>
<dbReference type="PRINTS" id="PR00315">
    <property type="entry name" value="ELONGATNFCT"/>
</dbReference>
<dbReference type="SMART" id="SM00838">
    <property type="entry name" value="EFG_C"/>
    <property type="match status" value="1"/>
</dbReference>
<dbReference type="SMART" id="SM00889">
    <property type="entry name" value="EFG_IV"/>
    <property type="match status" value="1"/>
</dbReference>
<dbReference type="SUPFAM" id="SSF54980">
    <property type="entry name" value="EF-G C-terminal domain-like"/>
    <property type="match status" value="2"/>
</dbReference>
<dbReference type="SUPFAM" id="SSF52540">
    <property type="entry name" value="P-loop containing nucleoside triphosphate hydrolases"/>
    <property type="match status" value="1"/>
</dbReference>
<dbReference type="SUPFAM" id="SSF54211">
    <property type="entry name" value="Ribosomal protein S5 domain 2-like"/>
    <property type="match status" value="1"/>
</dbReference>
<dbReference type="SUPFAM" id="SSF50447">
    <property type="entry name" value="Translation proteins"/>
    <property type="match status" value="1"/>
</dbReference>
<dbReference type="PROSITE" id="PS00301">
    <property type="entry name" value="G_TR_1"/>
    <property type="match status" value="1"/>
</dbReference>
<dbReference type="PROSITE" id="PS51722">
    <property type="entry name" value="G_TR_2"/>
    <property type="match status" value="1"/>
</dbReference>
<accession>A4XZ93</accession>
<reference key="1">
    <citation type="submission" date="2007-04" db="EMBL/GenBank/DDBJ databases">
        <title>Complete sequence of Pseudomonas mendocina ymp.</title>
        <authorList>
            <consortium name="US DOE Joint Genome Institute"/>
            <person name="Copeland A."/>
            <person name="Lucas S."/>
            <person name="Lapidus A."/>
            <person name="Barry K."/>
            <person name="Glavina del Rio T."/>
            <person name="Dalin E."/>
            <person name="Tice H."/>
            <person name="Pitluck S."/>
            <person name="Kiss H."/>
            <person name="Brettin T."/>
            <person name="Detter J.C."/>
            <person name="Bruce D."/>
            <person name="Han C."/>
            <person name="Schmutz J."/>
            <person name="Larimer F."/>
            <person name="Land M."/>
            <person name="Hauser L."/>
            <person name="Kyrpides N."/>
            <person name="Mikhailova N."/>
            <person name="Hersman L."/>
            <person name="Dubois J."/>
            <person name="Maurice P."/>
            <person name="Richardson P."/>
        </authorList>
    </citation>
    <scope>NUCLEOTIDE SEQUENCE [LARGE SCALE GENOMIC DNA]</scope>
    <source>
        <strain>ymp</strain>
    </source>
</reference>
<name>EFG_ECTM1</name>
<gene>
    <name evidence="1" type="primary">fusA</name>
    <name type="ordered locus">Pmen_3912</name>
</gene>
<organism>
    <name type="scientific">Ectopseudomonas mendocina (strain ymp)</name>
    <name type="common">Pseudomonas mendocina</name>
    <dbReference type="NCBI Taxonomy" id="399739"/>
    <lineage>
        <taxon>Bacteria</taxon>
        <taxon>Pseudomonadati</taxon>
        <taxon>Pseudomonadota</taxon>
        <taxon>Gammaproteobacteria</taxon>
        <taxon>Pseudomonadales</taxon>
        <taxon>Pseudomonadaceae</taxon>
        <taxon>Ectopseudomonas</taxon>
    </lineage>
</organism>
<evidence type="ECO:0000255" key="1">
    <source>
        <dbReference type="HAMAP-Rule" id="MF_00054"/>
    </source>
</evidence>